<keyword id="KW-0687">Ribonucleoprotein</keyword>
<keyword id="KW-0689">Ribosomal protein</keyword>
<keyword id="KW-0694">RNA-binding</keyword>
<keyword id="KW-0699">rRNA-binding</keyword>
<name>RL25_ALISL</name>
<comment type="function">
    <text evidence="1">This is one of the proteins that binds to the 5S RNA in the ribosome where it forms part of the central protuberance.</text>
</comment>
<comment type="subunit">
    <text evidence="1">Part of the 50S ribosomal subunit; part of the 5S rRNA/L5/L18/L25 subcomplex. Contacts the 5S rRNA. Binds to the 5S rRNA independently of L5 and L18.</text>
</comment>
<comment type="similarity">
    <text evidence="1">Belongs to the bacterial ribosomal protein bL25 family.</text>
</comment>
<feature type="chain" id="PRO_1000142575" description="Large ribosomal subunit protein bL25">
    <location>
        <begin position="1"/>
        <end position="92"/>
    </location>
</feature>
<organism>
    <name type="scientific">Aliivibrio salmonicida (strain LFI1238)</name>
    <name type="common">Vibrio salmonicida (strain LFI1238)</name>
    <dbReference type="NCBI Taxonomy" id="316275"/>
    <lineage>
        <taxon>Bacteria</taxon>
        <taxon>Pseudomonadati</taxon>
        <taxon>Pseudomonadota</taxon>
        <taxon>Gammaproteobacteria</taxon>
        <taxon>Vibrionales</taxon>
        <taxon>Vibrionaceae</taxon>
        <taxon>Aliivibrio</taxon>
    </lineage>
</organism>
<reference key="1">
    <citation type="journal article" date="2008" name="BMC Genomics">
        <title>The genome sequence of the fish pathogen Aliivibrio salmonicida strain LFI1238 shows extensive evidence of gene decay.</title>
        <authorList>
            <person name="Hjerde E."/>
            <person name="Lorentzen M.S."/>
            <person name="Holden M.T."/>
            <person name="Seeger K."/>
            <person name="Paulsen S."/>
            <person name="Bason N."/>
            <person name="Churcher C."/>
            <person name="Harris D."/>
            <person name="Norbertczak H."/>
            <person name="Quail M.A."/>
            <person name="Sanders S."/>
            <person name="Thurston S."/>
            <person name="Parkhill J."/>
            <person name="Willassen N.P."/>
            <person name="Thomson N.R."/>
        </authorList>
    </citation>
    <scope>NUCLEOTIDE SEQUENCE [LARGE SCALE GENOMIC DNA]</scope>
    <source>
        <strain>LFI1238</strain>
    </source>
</reference>
<gene>
    <name evidence="1" type="primary">rplY</name>
    <name type="ordered locus">VSAL_I2084</name>
</gene>
<accession>B6EI32</accession>
<sequence length="92" mass="10477">MKFEAVVRTEQGKGASRRLRHAGKFPAIVYGGTEAPVSIELIHFDVINQMDKPEFYEAIELVIDGATVKVKPQDVQRHAFKPKVEHMDFIRI</sequence>
<evidence type="ECO:0000255" key="1">
    <source>
        <dbReference type="HAMAP-Rule" id="MF_01336"/>
    </source>
</evidence>
<evidence type="ECO:0000305" key="2"/>
<protein>
    <recommendedName>
        <fullName evidence="1">Large ribosomal subunit protein bL25</fullName>
    </recommendedName>
    <alternativeName>
        <fullName evidence="2">50S ribosomal protein L25</fullName>
    </alternativeName>
</protein>
<proteinExistence type="inferred from homology"/>
<dbReference type="EMBL" id="FM178379">
    <property type="protein sequence ID" value="CAQ79769.1"/>
    <property type="molecule type" value="Genomic_DNA"/>
</dbReference>
<dbReference type="RefSeq" id="WP_012550619.1">
    <property type="nucleotide sequence ID" value="NC_011312.1"/>
</dbReference>
<dbReference type="SMR" id="B6EI32"/>
<dbReference type="KEGG" id="vsa:VSAL_I2084"/>
<dbReference type="eggNOG" id="COG1825">
    <property type="taxonomic scope" value="Bacteria"/>
</dbReference>
<dbReference type="HOGENOM" id="CLU_137946_0_0_6"/>
<dbReference type="Proteomes" id="UP000001730">
    <property type="component" value="Chromosome 1"/>
</dbReference>
<dbReference type="GO" id="GO:0022625">
    <property type="term" value="C:cytosolic large ribosomal subunit"/>
    <property type="evidence" value="ECO:0007669"/>
    <property type="project" value="TreeGrafter"/>
</dbReference>
<dbReference type="GO" id="GO:0008097">
    <property type="term" value="F:5S rRNA binding"/>
    <property type="evidence" value="ECO:0007669"/>
    <property type="project" value="InterPro"/>
</dbReference>
<dbReference type="GO" id="GO:0003735">
    <property type="term" value="F:structural constituent of ribosome"/>
    <property type="evidence" value="ECO:0007669"/>
    <property type="project" value="InterPro"/>
</dbReference>
<dbReference type="GO" id="GO:0006412">
    <property type="term" value="P:translation"/>
    <property type="evidence" value="ECO:0007669"/>
    <property type="project" value="UniProtKB-UniRule"/>
</dbReference>
<dbReference type="CDD" id="cd00495">
    <property type="entry name" value="Ribosomal_L25_TL5_CTC"/>
    <property type="match status" value="1"/>
</dbReference>
<dbReference type="FunFam" id="2.40.240.10:FF:000002">
    <property type="entry name" value="50S ribosomal protein L25"/>
    <property type="match status" value="1"/>
</dbReference>
<dbReference type="Gene3D" id="2.40.240.10">
    <property type="entry name" value="Ribosomal Protein L25, Chain P"/>
    <property type="match status" value="1"/>
</dbReference>
<dbReference type="HAMAP" id="MF_01336">
    <property type="entry name" value="Ribosomal_bL25"/>
    <property type="match status" value="1"/>
</dbReference>
<dbReference type="InterPro" id="IPR020056">
    <property type="entry name" value="Rbsml_bL25/Gln-tRNA_synth_N"/>
</dbReference>
<dbReference type="InterPro" id="IPR011035">
    <property type="entry name" value="Ribosomal_bL25/Gln-tRNA_synth"/>
</dbReference>
<dbReference type="InterPro" id="IPR020055">
    <property type="entry name" value="Ribosomal_bL25_short"/>
</dbReference>
<dbReference type="InterPro" id="IPR029751">
    <property type="entry name" value="Ribosomal_L25_dom"/>
</dbReference>
<dbReference type="InterPro" id="IPR020930">
    <property type="entry name" value="Ribosomal_uL5_bac-type"/>
</dbReference>
<dbReference type="NCBIfam" id="NF004612">
    <property type="entry name" value="PRK05943.1"/>
    <property type="match status" value="1"/>
</dbReference>
<dbReference type="PANTHER" id="PTHR33284">
    <property type="entry name" value="RIBOSOMAL PROTEIN L25/GLN-TRNA SYNTHETASE, ANTI-CODON-BINDING DOMAIN-CONTAINING PROTEIN"/>
    <property type="match status" value="1"/>
</dbReference>
<dbReference type="PANTHER" id="PTHR33284:SF1">
    <property type="entry name" value="RIBOSOMAL PROTEIN L25_GLN-TRNA SYNTHETASE, ANTI-CODON-BINDING DOMAIN-CONTAINING PROTEIN"/>
    <property type="match status" value="1"/>
</dbReference>
<dbReference type="Pfam" id="PF01386">
    <property type="entry name" value="Ribosomal_L25p"/>
    <property type="match status" value="1"/>
</dbReference>
<dbReference type="SUPFAM" id="SSF50715">
    <property type="entry name" value="Ribosomal protein L25-like"/>
    <property type="match status" value="1"/>
</dbReference>